<organism>
    <name type="scientific">Burkholderia mallei (strain NCTC 10247)</name>
    <dbReference type="NCBI Taxonomy" id="320389"/>
    <lineage>
        <taxon>Bacteria</taxon>
        <taxon>Pseudomonadati</taxon>
        <taxon>Pseudomonadota</taxon>
        <taxon>Betaproteobacteria</taxon>
        <taxon>Burkholderiales</taxon>
        <taxon>Burkholderiaceae</taxon>
        <taxon>Burkholderia</taxon>
        <taxon>pseudomallei group</taxon>
    </lineage>
</organism>
<feature type="chain" id="PRO_1000010915" description="Iron-sulfur cluster assembly protein CyaY">
    <location>
        <begin position="1"/>
        <end position="108"/>
    </location>
</feature>
<reference key="1">
    <citation type="journal article" date="2010" name="Genome Biol. Evol.">
        <title>Continuing evolution of Burkholderia mallei through genome reduction and large-scale rearrangements.</title>
        <authorList>
            <person name="Losada L."/>
            <person name="Ronning C.M."/>
            <person name="DeShazer D."/>
            <person name="Woods D."/>
            <person name="Fedorova N."/>
            <person name="Kim H.S."/>
            <person name="Shabalina S.A."/>
            <person name="Pearson T.R."/>
            <person name="Brinkac L."/>
            <person name="Tan P."/>
            <person name="Nandi T."/>
            <person name="Crabtree J."/>
            <person name="Badger J."/>
            <person name="Beckstrom-Sternberg S."/>
            <person name="Saqib M."/>
            <person name="Schutzer S.E."/>
            <person name="Keim P."/>
            <person name="Nierman W.C."/>
        </authorList>
    </citation>
    <scope>NUCLEOTIDE SEQUENCE [LARGE SCALE GENOMIC DNA]</scope>
    <source>
        <strain>NCTC 10247</strain>
    </source>
</reference>
<protein>
    <recommendedName>
        <fullName evidence="1">Iron-sulfur cluster assembly protein CyaY</fullName>
    </recommendedName>
</protein>
<gene>
    <name evidence="1" type="primary">cyaY</name>
    <name type="ordered locus">BMA10247_3449</name>
</gene>
<evidence type="ECO:0000255" key="1">
    <source>
        <dbReference type="HAMAP-Rule" id="MF_00142"/>
    </source>
</evidence>
<name>CYAY_BURM7</name>
<keyword id="KW-0408">Iron</keyword>
<keyword id="KW-0479">Metal-binding</keyword>
<sequence>MSDTDYLTRAEAVLAAVERSVDAANDGDADIDLERNGSVLTLTFENGSKIIVNLQPPMKEVWIAAKAGGFHYRFVDGAWRDTRSGDEFFAALTGYATQQAGMPIAFSA</sequence>
<comment type="function">
    <text evidence="1">Involved in iron-sulfur (Fe-S) cluster assembly. May act as a regulator of Fe-S biogenesis.</text>
</comment>
<comment type="similarity">
    <text evidence="1">Belongs to the frataxin family.</text>
</comment>
<proteinExistence type="inferred from homology"/>
<accession>A3MRS9</accession>
<dbReference type="EMBL" id="CP000548">
    <property type="protein sequence ID" value="ABO05516.1"/>
    <property type="molecule type" value="Genomic_DNA"/>
</dbReference>
<dbReference type="RefSeq" id="WP_004196764.1">
    <property type="nucleotide sequence ID" value="NZ_CP007802.1"/>
</dbReference>
<dbReference type="SMR" id="A3MRS9"/>
<dbReference type="GeneID" id="93061793"/>
<dbReference type="KEGG" id="bmaz:BM44_3069"/>
<dbReference type="KEGG" id="bmn:BMA10247_3449"/>
<dbReference type="PATRIC" id="fig|320389.8.peg.3438"/>
<dbReference type="GO" id="GO:0005829">
    <property type="term" value="C:cytosol"/>
    <property type="evidence" value="ECO:0007669"/>
    <property type="project" value="TreeGrafter"/>
</dbReference>
<dbReference type="GO" id="GO:0008199">
    <property type="term" value="F:ferric iron binding"/>
    <property type="evidence" value="ECO:0007669"/>
    <property type="project" value="InterPro"/>
</dbReference>
<dbReference type="GO" id="GO:0008198">
    <property type="term" value="F:ferrous iron binding"/>
    <property type="evidence" value="ECO:0007669"/>
    <property type="project" value="TreeGrafter"/>
</dbReference>
<dbReference type="GO" id="GO:0016226">
    <property type="term" value="P:iron-sulfur cluster assembly"/>
    <property type="evidence" value="ECO:0007669"/>
    <property type="project" value="UniProtKB-UniRule"/>
</dbReference>
<dbReference type="CDD" id="cd00503">
    <property type="entry name" value="Frataxin"/>
    <property type="match status" value="1"/>
</dbReference>
<dbReference type="Gene3D" id="3.30.920.10">
    <property type="entry name" value="Frataxin/CyaY"/>
    <property type="match status" value="1"/>
</dbReference>
<dbReference type="HAMAP" id="MF_00142">
    <property type="entry name" value="CyaY"/>
    <property type="match status" value="1"/>
</dbReference>
<dbReference type="InterPro" id="IPR047584">
    <property type="entry name" value="CyaY"/>
</dbReference>
<dbReference type="InterPro" id="IPR002908">
    <property type="entry name" value="Frataxin/CyaY"/>
</dbReference>
<dbReference type="InterPro" id="IPR036524">
    <property type="entry name" value="Frataxin/CyaY_sf"/>
</dbReference>
<dbReference type="InterPro" id="IPR020895">
    <property type="entry name" value="Frataxin_CS"/>
</dbReference>
<dbReference type="NCBIfam" id="TIGR03421">
    <property type="entry name" value="FeS_CyaY"/>
    <property type="match status" value="1"/>
</dbReference>
<dbReference type="PANTHER" id="PTHR16821">
    <property type="entry name" value="FRATAXIN"/>
    <property type="match status" value="1"/>
</dbReference>
<dbReference type="PANTHER" id="PTHR16821:SF2">
    <property type="entry name" value="FRATAXIN, MITOCHONDRIAL"/>
    <property type="match status" value="1"/>
</dbReference>
<dbReference type="Pfam" id="PF01491">
    <property type="entry name" value="Frataxin_Cyay"/>
    <property type="match status" value="1"/>
</dbReference>
<dbReference type="SMART" id="SM01219">
    <property type="entry name" value="Frataxin_Cyay"/>
    <property type="match status" value="1"/>
</dbReference>
<dbReference type="SUPFAM" id="SSF55387">
    <property type="entry name" value="Frataxin/Nqo15-like"/>
    <property type="match status" value="1"/>
</dbReference>
<dbReference type="PROSITE" id="PS01344">
    <property type="entry name" value="FRATAXIN_1"/>
    <property type="match status" value="1"/>
</dbReference>
<dbReference type="PROSITE" id="PS50810">
    <property type="entry name" value="FRATAXIN_2"/>
    <property type="match status" value="1"/>
</dbReference>